<accession>D0C9N6</accession>
<sequence length="371" mass="42603">MSAVEKLPEDFCANPDVAWTFPKVFYTSSQVFEHEKEAIFAKSWICVAHSSELAQPNDYITRKVIGENIVIIRGKDSVLRAFYNVCPHRGHELLSGSGKAKNVITCPYHAWTFKLDGSLALARNCDHVESFDKENSSMVPLKVEEYAGFLFINMDENATCVEDQLPGFAERLNQACGVIKDLKLAARFVTETPANWKVIVDNYMECYHCGPAHPGFADSVQVDKYWHTTHQNWTLQYGFARSSEKSFKLDPSVTDPEFHGFWTWPCTMFNVPPGSNFMTVIYEFPVDAETTLQHYDIYFTNEELTQDQKDLIEWYRNVFRPEDLNLVESVQRGLKSRGYRGQGRIMTDKQRSGISEHGIAYFQHLVAQYHQ</sequence>
<reference key="1">
    <citation type="journal article" date="2012" name="PLoS ONE">
        <title>The success of Acinetobacter species; genetic, metabolic and virulence attributes.</title>
        <authorList>
            <person name="Peleg A.Y."/>
            <person name="de Breij A."/>
            <person name="Adams M.D."/>
            <person name="Cerqueira G.M."/>
            <person name="Mocali S."/>
            <person name="Galardini M."/>
            <person name="Nibbering P.H."/>
            <person name="Earl A.M."/>
            <person name="Ward D.V."/>
            <person name="Paterson D.L."/>
            <person name="Seifert H."/>
            <person name="Dijkshoorn L."/>
        </authorList>
    </citation>
    <scope>NUCLEOTIDE SEQUENCE [LARGE SCALE GENOMIC DNA]</scope>
    <source>
        <strain>ATCC 19606 / DSM 30007 / JCM 6841 / CCUG 19606 / CIP 70.34 / NBRC 109757 / NCIMB 12457 / NCTC 12156 / 81</strain>
    </source>
</reference>
<reference key="2">
    <citation type="submission" date="2013-02" db="EMBL/GenBank/DDBJ databases">
        <title>The genome sequence of Acinetobacter baumannii CIP 70.34T.</title>
        <authorList>
            <consortium name="The Broad Institute Genome Sequencing Platform"/>
            <consortium name="The Broad Institute Genome Sequencing Center for Infectious Disease"/>
            <person name="Cerqueira G."/>
            <person name="Feldgarden M."/>
            <person name="Courvalin P."/>
            <person name="Perichon B."/>
            <person name="Grillot-Courvalin C."/>
            <person name="Clermont D."/>
            <person name="Rocha E."/>
            <person name="Yoon E.-J."/>
            <person name="Nemec A."/>
            <person name="Walker B."/>
            <person name="Young S.K."/>
            <person name="Zeng Q."/>
            <person name="Gargeya S."/>
            <person name="Fitzgerald M."/>
            <person name="Haas B."/>
            <person name="Abouelleil A."/>
            <person name="Alvarado L."/>
            <person name="Arachchi H.M."/>
            <person name="Berlin A.M."/>
            <person name="Chapman S.B."/>
            <person name="Dewar J."/>
            <person name="Goldberg J."/>
            <person name="Griggs A."/>
            <person name="Gujja S."/>
            <person name="Hansen M."/>
            <person name="Howarth C."/>
            <person name="Imamovic A."/>
            <person name="Larimer J."/>
            <person name="McCowan C."/>
            <person name="Murphy C."/>
            <person name="Neiman D."/>
            <person name="Pearson M."/>
            <person name="Priest M."/>
            <person name="Roberts A."/>
            <person name="Saif S."/>
            <person name="Shea T."/>
            <person name="Sisk P."/>
            <person name="Sykes S."/>
            <person name="Wortman J."/>
            <person name="Nusbaum C."/>
            <person name="Birren B."/>
        </authorList>
    </citation>
    <scope>NUCLEOTIDE SEQUENCE [LARGE SCALE GENOMIC DNA]</scope>
    <source>
        <strain>ATCC 19606 / DSM 30007 / JCM 6841 / CCUG 19606 / CIP 70.34 / NBRC 109757 / NCIMB 12457 / NCTC 12156 / 81</strain>
    </source>
</reference>
<reference key="3">
    <citation type="journal article" date="2014" name="Proc. Natl. Acad. Sci. U.S.A.">
        <title>Carnitine metabolism to trimethylamine by an unusual Rieske-type oxygenase from human microbiota.</title>
        <authorList>
            <person name="Zhu Y."/>
            <person name="Jameson E."/>
            <person name="Crosatti M."/>
            <person name="Schaefer H."/>
            <person name="Rajakumar K."/>
            <person name="Bugg T.D."/>
            <person name="Chen Y."/>
        </authorList>
    </citation>
    <scope>FUNCTION</scope>
    <scope>CATALYTIC ACTIVITY</scope>
    <scope>PATHWAY</scope>
    <scope>SUBUNIT</scope>
    <scope>DISRUPTION PHENOTYPE</scope>
    <scope>MUTAGENESIS OF GLU-205</scope>
    <source>
        <strain>ATCC 19606 / DSM 30007 / JCM 6841 / CCUG 19606 / CIP 70.34 / NBRC 109757 / NCIMB 12457 / NCTC 12156 / 81</strain>
    </source>
</reference>
<name>CNTA_ACIB2</name>
<organism>
    <name type="scientific">Acinetobacter baumannii (strain ATCC 19606 / DSM 30007 / JCM 6841 / CCUG 19606 / CIP 70.34 / NBRC 109757 / NCIMB 12457 / NCTC 12156 / 81)</name>
    <dbReference type="NCBI Taxonomy" id="575584"/>
    <lineage>
        <taxon>Bacteria</taxon>
        <taxon>Pseudomonadati</taxon>
        <taxon>Pseudomonadota</taxon>
        <taxon>Gammaproteobacteria</taxon>
        <taxon>Moraxellales</taxon>
        <taxon>Moraxellaceae</taxon>
        <taxon>Acinetobacter</taxon>
        <taxon>Acinetobacter calcoaceticus/baumannii complex</taxon>
    </lineage>
</organism>
<evidence type="ECO:0000250" key="1">
    <source>
        <dbReference type="UniProtKB" id="Q53122"/>
    </source>
</evidence>
<evidence type="ECO:0000255" key="2">
    <source>
        <dbReference type="HAMAP-Rule" id="MF_02097"/>
    </source>
</evidence>
<evidence type="ECO:0000255" key="3">
    <source>
        <dbReference type="PROSITE-ProRule" id="PRU00628"/>
    </source>
</evidence>
<evidence type="ECO:0000269" key="4">
    <source>
    </source>
</evidence>
<evidence type="ECO:0000303" key="5">
    <source>
    </source>
</evidence>
<evidence type="ECO:0000305" key="6"/>
<evidence type="ECO:0000312" key="7">
    <source>
        <dbReference type="EMBL" id="EEX03955.1"/>
    </source>
</evidence>
<evidence type="ECO:0000312" key="8">
    <source>
        <dbReference type="EMBL" id="ENW73705.1"/>
    </source>
</evidence>
<evidence type="ECO:0007829" key="9">
    <source>
        <dbReference type="PDB" id="6Y9C"/>
    </source>
</evidence>
<protein>
    <recommendedName>
        <fullName evidence="2 6">Carnitine monooxygenase oxygenase subunit</fullName>
        <ecNumber evidence="2 4">1.14.13.239</ecNumber>
    </recommendedName>
    <alternativeName>
        <fullName evidence="2 6">Carnitine monooxygenase alpha subunit</fullName>
    </alternativeName>
</protein>
<dbReference type="EC" id="1.14.13.239" evidence="2 4"/>
<dbReference type="EMBL" id="GG704573">
    <property type="protein sequence ID" value="EEX03955.1"/>
    <property type="molecule type" value="Genomic_DNA"/>
</dbReference>
<dbReference type="EMBL" id="APRG01000016">
    <property type="protein sequence ID" value="ENW73705.1"/>
    <property type="molecule type" value="Genomic_DNA"/>
</dbReference>
<dbReference type="RefSeq" id="WP_001277086.1">
    <property type="nucleotide sequence ID" value="NZ_MJHA01000009.1"/>
</dbReference>
<dbReference type="PDB" id="6Y9C">
    <property type="method" value="X-ray"/>
    <property type="resolution" value="1.80 A"/>
    <property type="chains" value="A=1-371"/>
</dbReference>
<dbReference type="PDBsum" id="6Y9C"/>
<dbReference type="SMR" id="D0C9N6"/>
<dbReference type="GeneID" id="92892784"/>
<dbReference type="PATRIC" id="fig|575584.18.peg.3259"/>
<dbReference type="BioCyc" id="MetaCyc:MONOMER-18569"/>
<dbReference type="BRENDA" id="1.14.13.239">
    <property type="organism ID" value="98"/>
</dbReference>
<dbReference type="UniPathway" id="UPA00117"/>
<dbReference type="Proteomes" id="UP000005740">
    <property type="component" value="Unassembled WGS sequence"/>
</dbReference>
<dbReference type="GO" id="GO:0051537">
    <property type="term" value="F:2 iron, 2 sulfur cluster binding"/>
    <property type="evidence" value="ECO:0007669"/>
    <property type="project" value="UniProtKB-UniRule"/>
</dbReference>
<dbReference type="GO" id="GO:0005506">
    <property type="term" value="F:iron ion binding"/>
    <property type="evidence" value="ECO:0007669"/>
    <property type="project" value="InterPro"/>
</dbReference>
<dbReference type="GO" id="GO:0016709">
    <property type="term" value="F:oxidoreductase activity, acting on paired donors, with incorporation or reduction of molecular oxygen, NAD(P)H as one donor, and incorporation of one atom of oxygen"/>
    <property type="evidence" value="ECO:0007669"/>
    <property type="project" value="UniProtKB-UniRule"/>
</dbReference>
<dbReference type="GO" id="GO:0009437">
    <property type="term" value="P:carnitine metabolic process"/>
    <property type="evidence" value="ECO:0007669"/>
    <property type="project" value="UniProtKB-UniRule"/>
</dbReference>
<dbReference type="CDD" id="cd08886">
    <property type="entry name" value="RHO_alpha_C_2"/>
    <property type="match status" value="1"/>
</dbReference>
<dbReference type="CDD" id="cd03469">
    <property type="entry name" value="Rieske_RO_Alpha_N"/>
    <property type="match status" value="1"/>
</dbReference>
<dbReference type="Gene3D" id="3.90.380.10">
    <property type="entry name" value="Naphthalene 1,2-dioxygenase Alpha Subunit, Chain A, domain 1"/>
    <property type="match status" value="2"/>
</dbReference>
<dbReference type="Gene3D" id="2.102.10.10">
    <property type="entry name" value="Rieske [2Fe-2S] iron-sulphur domain"/>
    <property type="match status" value="1"/>
</dbReference>
<dbReference type="HAMAP" id="MF_02097">
    <property type="entry name" value="Carnitine_monoox_A"/>
    <property type="match status" value="1"/>
</dbReference>
<dbReference type="InterPro" id="IPR039004">
    <property type="entry name" value="Carnitine_monoox_A"/>
</dbReference>
<dbReference type="InterPro" id="IPR017941">
    <property type="entry name" value="Rieske_2Fe-2S"/>
</dbReference>
<dbReference type="InterPro" id="IPR036922">
    <property type="entry name" value="Rieske_2Fe-2S_sf"/>
</dbReference>
<dbReference type="InterPro" id="IPR015881">
    <property type="entry name" value="Ring-hydroxy_dOase_2Fe2S_BS"/>
</dbReference>
<dbReference type="InterPro" id="IPR015879">
    <property type="entry name" value="Ring_hydroxy_dOase_asu_C_dom"/>
</dbReference>
<dbReference type="InterPro" id="IPR001663">
    <property type="entry name" value="Rng_hydr_dOase-A"/>
</dbReference>
<dbReference type="PANTHER" id="PTHR43756">
    <property type="entry name" value="CHOLINE MONOOXYGENASE, CHLOROPLASTIC"/>
    <property type="match status" value="1"/>
</dbReference>
<dbReference type="PANTHER" id="PTHR43756:SF5">
    <property type="entry name" value="CHOLINE MONOOXYGENASE, CHLOROPLASTIC"/>
    <property type="match status" value="1"/>
</dbReference>
<dbReference type="Pfam" id="PF00355">
    <property type="entry name" value="Rieske"/>
    <property type="match status" value="1"/>
</dbReference>
<dbReference type="Pfam" id="PF00848">
    <property type="entry name" value="Ring_hydroxyl_A"/>
    <property type="match status" value="1"/>
</dbReference>
<dbReference type="PRINTS" id="PR00090">
    <property type="entry name" value="RNGDIOXGNASE"/>
</dbReference>
<dbReference type="SUPFAM" id="SSF55961">
    <property type="entry name" value="Bet v1-like"/>
    <property type="match status" value="1"/>
</dbReference>
<dbReference type="SUPFAM" id="SSF50022">
    <property type="entry name" value="ISP domain"/>
    <property type="match status" value="1"/>
</dbReference>
<dbReference type="PROSITE" id="PS51296">
    <property type="entry name" value="RIESKE"/>
    <property type="match status" value="1"/>
</dbReference>
<dbReference type="PROSITE" id="PS00570">
    <property type="entry name" value="RING_HYDROXYL_ALPHA"/>
    <property type="match status" value="1"/>
</dbReference>
<gene>
    <name evidence="5" type="primary">cntA</name>
    <name evidence="8" type="ORF">F911_03119</name>
    <name evidence="7" type="ORF">HMPREF0010_01349</name>
</gene>
<comment type="function">
    <text evidence="2 4">Converts carnitine to trimethylamine and malic semialdehyde.</text>
</comment>
<comment type="catalytic activity">
    <reaction evidence="2 4">
        <text>(R)-carnitine + NADH + O2 + H(+) = (3R)-3-hydroxy-4-oxobutanoate + trimethylamine + NAD(+) + H2O</text>
        <dbReference type="Rhea" id="RHEA:55396"/>
        <dbReference type="ChEBI" id="CHEBI:15377"/>
        <dbReference type="ChEBI" id="CHEBI:15378"/>
        <dbReference type="ChEBI" id="CHEBI:15379"/>
        <dbReference type="ChEBI" id="CHEBI:16347"/>
        <dbReference type="ChEBI" id="CHEBI:57540"/>
        <dbReference type="ChEBI" id="CHEBI:57945"/>
        <dbReference type="ChEBI" id="CHEBI:58389"/>
        <dbReference type="ChEBI" id="CHEBI:138809"/>
        <dbReference type="EC" id="1.14.13.239"/>
    </reaction>
</comment>
<comment type="catalytic activity">
    <reaction evidence="2 4">
        <text>(R)-carnitine + NADPH + O2 + H(+) = (3R)-3-hydroxy-4-oxobutanoate + trimethylamine + NADP(+) + H2O</text>
        <dbReference type="Rhea" id="RHEA:55368"/>
        <dbReference type="ChEBI" id="CHEBI:15377"/>
        <dbReference type="ChEBI" id="CHEBI:15378"/>
        <dbReference type="ChEBI" id="CHEBI:15379"/>
        <dbReference type="ChEBI" id="CHEBI:16347"/>
        <dbReference type="ChEBI" id="CHEBI:57783"/>
        <dbReference type="ChEBI" id="CHEBI:58349"/>
        <dbReference type="ChEBI" id="CHEBI:58389"/>
        <dbReference type="ChEBI" id="CHEBI:138809"/>
        <dbReference type="EC" id="1.14.13.239"/>
    </reaction>
</comment>
<comment type="cofactor">
    <cofactor evidence="2 3">
        <name>[2Fe-2S] cluster</name>
        <dbReference type="ChEBI" id="CHEBI:190135"/>
    </cofactor>
    <text evidence="2 3">Binds 1 [2Fe-2S] cluster per subunit.</text>
</comment>
<comment type="cofactor">
    <cofactor evidence="1 2">
        <name>Fe cation</name>
        <dbReference type="ChEBI" id="CHEBI:24875"/>
    </cofactor>
    <text evidence="1 2">Binds 1 Fe cation per subunit.</text>
</comment>
<comment type="pathway">
    <text evidence="2 4">Amine and polyamine metabolism; carnitine metabolism.</text>
</comment>
<comment type="subunit">
    <text evidence="4">Composed of an oxygenase subunit (cntA) and a reductase subunit (cntB).</text>
</comment>
<comment type="disruption phenotype">
    <text evidence="4">Mutant cannot grow on carnitine as a sole carbon and energy source, whereas the growth on succinate is not affected. Mutation abolishes trimethylamine formation from carnitine.</text>
</comment>
<comment type="similarity">
    <text evidence="2 6">Belongs to the bacterial ring-hydroxylating dioxygenase alpha subunit family. CntA subfamily.</text>
</comment>
<feature type="chain" id="PRO_0000442686" description="Carnitine monooxygenase oxygenase subunit">
    <location>
        <begin position="1"/>
        <end position="371"/>
    </location>
</feature>
<feature type="domain" description="Rieske" evidence="2 3">
    <location>
        <begin position="44"/>
        <end position="152"/>
    </location>
</feature>
<feature type="binding site" evidence="2 3">
    <location>
        <position position="86"/>
    </location>
    <ligand>
        <name>[2Fe-2S] cluster</name>
        <dbReference type="ChEBI" id="CHEBI:190135"/>
    </ligand>
</feature>
<feature type="binding site" evidence="2 3">
    <location>
        <position position="88"/>
    </location>
    <ligand>
        <name>[2Fe-2S] cluster</name>
        <dbReference type="ChEBI" id="CHEBI:190135"/>
    </ligand>
</feature>
<feature type="binding site" evidence="2 3">
    <location>
        <position position="106"/>
    </location>
    <ligand>
        <name>[2Fe-2S] cluster</name>
        <dbReference type="ChEBI" id="CHEBI:190135"/>
    </ligand>
</feature>
<feature type="binding site" evidence="2 3">
    <location>
        <position position="109"/>
    </location>
    <ligand>
        <name>[2Fe-2S] cluster</name>
        <dbReference type="ChEBI" id="CHEBI:190135"/>
    </ligand>
</feature>
<feature type="binding site" evidence="1 2">
    <location>
        <position position="208"/>
    </location>
    <ligand>
        <name>Fe cation</name>
        <dbReference type="ChEBI" id="CHEBI:24875"/>
    </ligand>
</feature>
<feature type="binding site" evidence="1 2">
    <location>
        <position position="213"/>
    </location>
    <ligand>
        <name>Fe cation</name>
        <dbReference type="ChEBI" id="CHEBI:24875"/>
    </ligand>
</feature>
<feature type="binding site" evidence="1 2">
    <location>
        <position position="323"/>
    </location>
    <ligand>
        <name>Fe cation</name>
        <dbReference type="ChEBI" id="CHEBI:24875"/>
    </ligand>
</feature>
<feature type="mutagenesis site" description="Loss of activity." evidence="4">
    <original>E</original>
    <variation>A</variation>
    <variation>D</variation>
    <location>
        <position position="205"/>
    </location>
</feature>
<feature type="turn" evidence="9">
    <location>
        <begin position="9"/>
        <end position="12"/>
    </location>
</feature>
<feature type="helix" evidence="9">
    <location>
        <begin position="15"/>
        <end position="17"/>
    </location>
</feature>
<feature type="helix" evidence="9">
    <location>
        <begin position="24"/>
        <end position="27"/>
    </location>
</feature>
<feature type="helix" evidence="9">
    <location>
        <begin position="29"/>
        <end position="38"/>
    </location>
</feature>
<feature type="turn" evidence="9">
    <location>
        <begin position="39"/>
        <end position="42"/>
    </location>
</feature>
<feature type="strand" evidence="9">
    <location>
        <begin position="45"/>
        <end position="49"/>
    </location>
</feature>
<feature type="helix" evidence="9">
    <location>
        <begin position="50"/>
        <end position="53"/>
    </location>
</feature>
<feature type="strand" evidence="9">
    <location>
        <begin position="58"/>
        <end position="64"/>
    </location>
</feature>
<feature type="strand" evidence="9">
    <location>
        <begin position="67"/>
        <end position="73"/>
    </location>
</feature>
<feature type="strand" evidence="9">
    <location>
        <begin position="79"/>
        <end position="85"/>
    </location>
</feature>
<feature type="turn" evidence="9">
    <location>
        <begin position="87"/>
        <end position="89"/>
    </location>
</feature>
<feature type="strand" evidence="9">
    <location>
        <begin position="96"/>
        <end position="99"/>
    </location>
</feature>
<feature type="strand" evidence="9">
    <location>
        <begin position="102"/>
        <end position="105"/>
    </location>
</feature>
<feature type="turn" evidence="9">
    <location>
        <begin position="107"/>
        <end position="109"/>
    </location>
</feature>
<feature type="strand" evidence="9">
    <location>
        <begin position="112"/>
        <end position="114"/>
    </location>
</feature>
<feature type="helix" evidence="9">
    <location>
        <begin position="125"/>
        <end position="127"/>
    </location>
</feature>
<feature type="helix" evidence="9">
    <location>
        <begin position="134"/>
        <end position="136"/>
    </location>
</feature>
<feature type="strand" evidence="9">
    <location>
        <begin position="140"/>
        <end position="146"/>
    </location>
</feature>
<feature type="strand" evidence="9">
    <location>
        <begin position="149"/>
        <end position="154"/>
    </location>
</feature>
<feature type="helix" evidence="9">
    <location>
        <begin position="161"/>
        <end position="164"/>
    </location>
</feature>
<feature type="helix" evidence="9">
    <location>
        <begin position="168"/>
        <end position="175"/>
    </location>
</feature>
<feature type="helix" evidence="9">
    <location>
        <begin position="179"/>
        <end position="181"/>
    </location>
</feature>
<feature type="strand" evidence="9">
    <location>
        <begin position="183"/>
        <end position="194"/>
    </location>
</feature>
<feature type="helix" evidence="9">
    <location>
        <begin position="196"/>
        <end position="203"/>
    </location>
</feature>
<feature type="helix" evidence="9">
    <location>
        <begin position="209"/>
        <end position="212"/>
    </location>
</feature>
<feature type="helix" evidence="9">
    <location>
        <begin position="214"/>
        <end position="219"/>
    </location>
</feature>
<feature type="strand" evidence="9">
    <location>
        <begin position="220"/>
        <end position="229"/>
    </location>
</feature>
<feature type="strand" evidence="9">
    <location>
        <begin position="231"/>
        <end position="240"/>
    </location>
</feature>
<feature type="strand" evidence="9">
    <location>
        <begin position="257"/>
        <end position="263"/>
    </location>
</feature>
<feature type="turn" evidence="9">
    <location>
        <begin position="264"/>
        <end position="266"/>
    </location>
</feature>
<feature type="strand" evidence="9">
    <location>
        <begin position="267"/>
        <end position="271"/>
    </location>
</feature>
<feature type="strand" evidence="9">
    <location>
        <begin position="275"/>
        <end position="287"/>
    </location>
</feature>
<feature type="strand" evidence="9">
    <location>
        <begin position="290"/>
        <end position="300"/>
    </location>
</feature>
<feature type="helix" evidence="9">
    <location>
        <begin position="306"/>
        <end position="317"/>
    </location>
</feature>
<feature type="helix" evidence="9">
    <location>
        <begin position="319"/>
        <end position="333"/>
    </location>
</feature>
<feature type="helix" evidence="9">
    <location>
        <begin position="357"/>
        <end position="367"/>
    </location>
</feature>
<proteinExistence type="evidence at protein level"/>
<keyword id="KW-0001">2Fe-2S</keyword>
<keyword id="KW-0002">3D-structure</keyword>
<keyword id="KW-0408">Iron</keyword>
<keyword id="KW-0411">Iron-sulfur</keyword>
<keyword id="KW-0479">Metal-binding</keyword>
<keyword id="KW-0520">NAD</keyword>
<keyword id="KW-0521">NADP</keyword>
<keyword id="KW-0560">Oxidoreductase</keyword>
<keyword id="KW-1185">Reference proteome</keyword>